<protein>
    <recommendedName>
        <fullName>Linoleate 9S-lipoxygenase</fullName>
        <ecNumber>1.13.11.58</ecNumber>
    </recommendedName>
    <alternativeName>
        <fullName>Lipoxygenase</fullName>
        <ecNumber>1.13.11.12</ecNumber>
    </alternativeName>
</protein>
<reference key="1">
    <citation type="journal article" date="1993" name="Mol. Plant Microbe Interact.">
        <title>Spatial and temporal accumulation of defense gene transcripts in bean (Phaseolus vulgaris) leaves in relation to bacteria-induced hypersensitive cell death.</title>
        <authorList>
            <person name="Slusarenko A.J."/>
            <person name="Meier B.M."/>
            <person name="Shaw N."/>
        </authorList>
    </citation>
    <scope>NUCLEOTIDE SEQUENCE [MRNA]</scope>
    <source>
        <strain>cv. Red Mexican</strain>
        <tissue>Leaf</tissue>
    </source>
</reference>
<sequence length="741" mass="84197">IPGAFYIKNFMQVEFYLKSLTLEDIPNHGTIHFICNSWIYNSKVYKSDRIFFANNTYLPSETPAPLLKYREEELKNVRGDGSGERKEWDRVYDYDVYNDLGNPDKGAALARPVLGGSTLPYPRRGRTGRPKTKKDPNSEKPSDFVYLPRDEAFGHLKSSDFLAYGLKSVSQDVLPVLTDAFDGNLLSLEFDNFAEVHKLYEGGVTLPTNFLSKYAPIPIVKEIFRSDGEQFLKYPPPKVMQVNKSAWMTDEEFARETIAGVNPNVIKSLEEFPPRSKLDTQSFGDHTSIITKEHLEINLGGLTVEQAIQSKKLFILDHHDYLIPYLRRINASATKTYATRTIFFLKSDGTLAPLAIELSKPHPQGDEHGPVSEVYVPAYEGVEAYIWLLAKAYVVVNDSCYHQLVSHWLNTHAVVEPFVLATNRQLSVVHPVYKLLFPHYRDTMNINSLARKSLVNADGIIEKTFLWGRYALELSAVIYKDWSLHDQALPNDLVKRGVAVKDPSAPHGVKLVIEDYPYASDGLEIWDAIKSWVVEYVAFYYKSDEVLQQDSELQAWWKELVQVGHGDLKDKPWWPKMQSRENLVEVSTTLIWIASALHAAVNFGQYPYGGLILNRPTISRRFMPEKGSAEYAALAKNPEKEFLKTITGKKETLIDLTVIEILSRHASDEIYLGERDGGDHWTSDAGPLEAFKRFGKKLAEIEKKLVQKNNDETLRNRTGPAKMPYTLLYPSSEEGLTFRGI</sequence>
<evidence type="ECO:0000255" key="1">
    <source>
        <dbReference type="PROSITE-ProRule" id="PRU00152"/>
    </source>
</evidence>
<evidence type="ECO:0000255" key="2">
    <source>
        <dbReference type="PROSITE-ProRule" id="PRU00726"/>
    </source>
</evidence>
<evidence type="ECO:0000256" key="3">
    <source>
        <dbReference type="SAM" id="MobiDB-lite"/>
    </source>
</evidence>
<evidence type="ECO:0000305" key="4"/>
<keyword id="KW-0963">Cytoplasm</keyword>
<keyword id="KW-0223">Dioxygenase</keyword>
<keyword id="KW-0275">Fatty acid biosynthesis</keyword>
<keyword id="KW-0276">Fatty acid metabolism</keyword>
<keyword id="KW-0408">Iron</keyword>
<keyword id="KW-0444">Lipid biosynthesis</keyword>
<keyword id="KW-0443">Lipid metabolism</keyword>
<keyword id="KW-0479">Metal-binding</keyword>
<keyword id="KW-0560">Oxidoreductase</keyword>
<keyword id="KW-0925">Oxylipin biosynthesis</keyword>
<feature type="chain" id="PRO_0000220716" description="Linoleate 9S-lipoxygenase">
    <location>
        <begin position="1" status="less than"/>
        <end position="741" status="greater than"/>
    </location>
</feature>
<feature type="domain" description="PLAT" evidence="1">
    <location>
        <begin position="1" status="less than"/>
        <end position="53"/>
    </location>
</feature>
<feature type="domain" description="Lipoxygenase" evidence="2">
    <location>
        <begin position="56"/>
        <end position="741"/>
    </location>
</feature>
<feature type="region of interest" description="Disordered" evidence="3">
    <location>
        <begin position="108"/>
        <end position="144"/>
    </location>
</feature>
<feature type="compositionally biased region" description="Basic residues" evidence="3">
    <location>
        <begin position="123"/>
        <end position="132"/>
    </location>
</feature>
<feature type="compositionally biased region" description="Basic and acidic residues" evidence="3">
    <location>
        <begin position="133"/>
        <end position="144"/>
    </location>
</feature>
<feature type="binding site" evidence="2">
    <location>
        <position position="407"/>
    </location>
    <ligand>
        <name>Fe cation</name>
        <dbReference type="ChEBI" id="CHEBI:24875"/>
        <note>catalytic</note>
    </ligand>
</feature>
<feature type="binding site" evidence="2">
    <location>
        <position position="412"/>
    </location>
    <ligand>
        <name>Fe cation</name>
        <dbReference type="ChEBI" id="CHEBI:24875"/>
        <note>catalytic</note>
    </ligand>
</feature>
<feature type="binding site" evidence="2">
    <location>
        <position position="598"/>
    </location>
    <ligand>
        <name>Fe cation</name>
        <dbReference type="ChEBI" id="CHEBI:24875"/>
        <note>catalytic</note>
    </ligand>
</feature>
<feature type="binding site" evidence="2">
    <location>
        <position position="602"/>
    </location>
    <ligand>
        <name>Fe cation</name>
        <dbReference type="ChEBI" id="CHEBI:24875"/>
        <note>catalytic</note>
    </ligand>
</feature>
<feature type="non-terminal residue">
    <location>
        <position position="1"/>
    </location>
</feature>
<feature type="non-terminal residue">
    <location>
        <position position="741"/>
    </location>
</feature>
<proteinExistence type="evidence at transcript level"/>
<comment type="function">
    <text>Plant lipoxygenase may be involved in a number of diverse aspects of plant physiology including growth and development, pest resistance, and senescence or responses to wounding. It catalyzes the hydroperoxidation of lipids containing a cis,cis-1,4-pentadiene structure.</text>
</comment>
<comment type="catalytic activity">
    <reaction>
        <text>(9Z,12Z)-octadecadienoate + O2 = (9S)-hydroperoxy-(10E,12Z)-octadecadienoate</text>
        <dbReference type="Rhea" id="RHEA:30291"/>
        <dbReference type="ChEBI" id="CHEBI:15379"/>
        <dbReference type="ChEBI" id="CHEBI:30245"/>
        <dbReference type="ChEBI" id="CHEBI:60955"/>
        <dbReference type="EC" id="1.13.11.58"/>
    </reaction>
</comment>
<comment type="catalytic activity">
    <reaction>
        <text>(9Z,12Z)-octadecadienoate + O2 = (13S)-hydroperoxy-(9Z,11E)-octadecadienoate</text>
        <dbReference type="Rhea" id="RHEA:22780"/>
        <dbReference type="ChEBI" id="CHEBI:15379"/>
        <dbReference type="ChEBI" id="CHEBI:30245"/>
        <dbReference type="ChEBI" id="CHEBI:57466"/>
        <dbReference type="EC" id="1.13.11.12"/>
    </reaction>
</comment>
<comment type="catalytic activity">
    <reaction>
        <text>(9Z,12Z,15Z)-octadecatrienoate + O2 = (13S)-hydroperoxy-(9Z,11E,15Z)-octadecatrienoate</text>
        <dbReference type="Rhea" id="RHEA:34495"/>
        <dbReference type="ChEBI" id="CHEBI:15379"/>
        <dbReference type="ChEBI" id="CHEBI:32387"/>
        <dbReference type="ChEBI" id="CHEBI:58757"/>
        <dbReference type="EC" id="1.13.11.12"/>
    </reaction>
</comment>
<comment type="cofactor">
    <cofactor evidence="2">
        <name>Fe cation</name>
        <dbReference type="ChEBI" id="CHEBI:24875"/>
    </cofactor>
    <text evidence="2">Binds 1 Fe cation per subunit. Iron is tightly bound.</text>
</comment>
<comment type="pathway">
    <text evidence="2">Lipid metabolism; oxylipin biosynthesis.</text>
</comment>
<comment type="subunit">
    <text>Monomer.</text>
</comment>
<comment type="subcellular location">
    <subcellularLocation>
        <location>Cytoplasm</location>
    </subcellularLocation>
</comment>
<comment type="similarity">
    <text evidence="4">Belongs to the lipoxygenase family.</text>
</comment>
<organism>
    <name type="scientific">Phaseolus vulgaris</name>
    <name type="common">Kidney bean</name>
    <name type="synonym">French bean</name>
    <dbReference type="NCBI Taxonomy" id="3885"/>
    <lineage>
        <taxon>Eukaryota</taxon>
        <taxon>Viridiplantae</taxon>
        <taxon>Streptophyta</taxon>
        <taxon>Embryophyta</taxon>
        <taxon>Tracheophyta</taxon>
        <taxon>Spermatophyta</taxon>
        <taxon>Magnoliopsida</taxon>
        <taxon>eudicotyledons</taxon>
        <taxon>Gunneridae</taxon>
        <taxon>Pentapetalae</taxon>
        <taxon>rosids</taxon>
        <taxon>fabids</taxon>
        <taxon>Fabales</taxon>
        <taxon>Fabaceae</taxon>
        <taxon>Papilionoideae</taxon>
        <taxon>50 kb inversion clade</taxon>
        <taxon>NPAAA clade</taxon>
        <taxon>indigoferoid/millettioid clade</taxon>
        <taxon>Phaseoleae</taxon>
        <taxon>Phaseolus</taxon>
    </lineage>
</organism>
<dbReference type="EC" id="1.13.11.58"/>
<dbReference type="EC" id="1.13.11.12"/>
<dbReference type="EMBL" id="X63521">
    <property type="protein sequence ID" value="CAA45086.1"/>
    <property type="molecule type" value="mRNA"/>
</dbReference>
<dbReference type="PIR" id="S18906">
    <property type="entry name" value="S18906"/>
</dbReference>
<dbReference type="SMR" id="P27481"/>
<dbReference type="eggNOG" id="ENOG502QQSP">
    <property type="taxonomic scope" value="Eukaryota"/>
</dbReference>
<dbReference type="UniPathway" id="UPA00382"/>
<dbReference type="GO" id="GO:0005737">
    <property type="term" value="C:cytoplasm"/>
    <property type="evidence" value="ECO:0007669"/>
    <property type="project" value="UniProtKB-SubCell"/>
</dbReference>
<dbReference type="GO" id="GO:0016165">
    <property type="term" value="F:linoleate 13S-lipoxygenase activity"/>
    <property type="evidence" value="ECO:0007669"/>
    <property type="project" value="UniProtKB-EC"/>
</dbReference>
<dbReference type="GO" id="GO:1990136">
    <property type="term" value="F:linoleate 9S-lipoxygenase activity"/>
    <property type="evidence" value="ECO:0007669"/>
    <property type="project" value="UniProtKB-EC"/>
</dbReference>
<dbReference type="GO" id="GO:0046872">
    <property type="term" value="F:metal ion binding"/>
    <property type="evidence" value="ECO:0007669"/>
    <property type="project" value="UniProtKB-KW"/>
</dbReference>
<dbReference type="GO" id="GO:0006633">
    <property type="term" value="P:fatty acid biosynthetic process"/>
    <property type="evidence" value="ECO:0007669"/>
    <property type="project" value="UniProtKB-KW"/>
</dbReference>
<dbReference type="GO" id="GO:0034440">
    <property type="term" value="P:lipid oxidation"/>
    <property type="evidence" value="ECO:0007669"/>
    <property type="project" value="InterPro"/>
</dbReference>
<dbReference type="GO" id="GO:0031408">
    <property type="term" value="P:oxylipin biosynthetic process"/>
    <property type="evidence" value="ECO:0007669"/>
    <property type="project" value="UniProtKB-UniPathway"/>
</dbReference>
<dbReference type="FunFam" id="1.20.245.10:FF:000002">
    <property type="entry name" value="Lipoxygenase"/>
    <property type="match status" value="1"/>
</dbReference>
<dbReference type="FunFam" id="3.10.450.60:FF:000002">
    <property type="entry name" value="Lipoxygenase"/>
    <property type="match status" value="1"/>
</dbReference>
<dbReference type="FunFam" id="4.10.375.10:FF:000001">
    <property type="entry name" value="Lipoxygenase"/>
    <property type="match status" value="1"/>
</dbReference>
<dbReference type="Gene3D" id="3.10.450.60">
    <property type="match status" value="1"/>
</dbReference>
<dbReference type="Gene3D" id="4.10.375.10">
    <property type="entry name" value="Lipoxygenase-1, Domain 2"/>
    <property type="match status" value="1"/>
</dbReference>
<dbReference type="Gene3D" id="4.10.372.10">
    <property type="entry name" value="Lipoxygenase-1, Domain 3"/>
    <property type="match status" value="1"/>
</dbReference>
<dbReference type="Gene3D" id="1.20.245.10">
    <property type="entry name" value="Lipoxygenase-1, Domain 5"/>
    <property type="match status" value="1"/>
</dbReference>
<dbReference type="Gene3D" id="2.60.60.20">
    <property type="entry name" value="PLAT/LH2 domain"/>
    <property type="match status" value="1"/>
</dbReference>
<dbReference type="InterPro" id="IPR000907">
    <property type="entry name" value="LipOase"/>
</dbReference>
<dbReference type="InterPro" id="IPR013819">
    <property type="entry name" value="LipOase_C"/>
</dbReference>
<dbReference type="InterPro" id="IPR036226">
    <property type="entry name" value="LipOase_C_sf"/>
</dbReference>
<dbReference type="InterPro" id="IPR020834">
    <property type="entry name" value="LipOase_CS"/>
</dbReference>
<dbReference type="InterPro" id="IPR020833">
    <property type="entry name" value="LipOase_Fe_BS"/>
</dbReference>
<dbReference type="InterPro" id="IPR001246">
    <property type="entry name" value="LipOase_plant"/>
</dbReference>
<dbReference type="InterPro" id="IPR027433">
    <property type="entry name" value="Lipoxygenase_dom_3"/>
</dbReference>
<dbReference type="InterPro" id="IPR001024">
    <property type="entry name" value="PLAT/LH2_dom"/>
</dbReference>
<dbReference type="InterPro" id="IPR036392">
    <property type="entry name" value="PLAT/LH2_dom_sf"/>
</dbReference>
<dbReference type="PANTHER" id="PTHR11771">
    <property type="entry name" value="LIPOXYGENASE"/>
    <property type="match status" value="1"/>
</dbReference>
<dbReference type="Pfam" id="PF00305">
    <property type="entry name" value="Lipoxygenase"/>
    <property type="match status" value="1"/>
</dbReference>
<dbReference type="Pfam" id="PF01477">
    <property type="entry name" value="PLAT"/>
    <property type="match status" value="1"/>
</dbReference>
<dbReference type="PRINTS" id="PR00087">
    <property type="entry name" value="LIPOXYGENASE"/>
</dbReference>
<dbReference type="PRINTS" id="PR00468">
    <property type="entry name" value="PLTLPOXGNASE"/>
</dbReference>
<dbReference type="SMART" id="SM00308">
    <property type="entry name" value="LH2"/>
    <property type="match status" value="1"/>
</dbReference>
<dbReference type="SUPFAM" id="SSF49723">
    <property type="entry name" value="Lipase/lipooxygenase domain (PLAT/LH2 domain)"/>
    <property type="match status" value="1"/>
</dbReference>
<dbReference type="SUPFAM" id="SSF48484">
    <property type="entry name" value="Lipoxigenase"/>
    <property type="match status" value="1"/>
</dbReference>
<dbReference type="PROSITE" id="PS00711">
    <property type="entry name" value="LIPOXYGENASE_1"/>
    <property type="match status" value="1"/>
</dbReference>
<dbReference type="PROSITE" id="PS00081">
    <property type="entry name" value="LIPOXYGENASE_2"/>
    <property type="match status" value="1"/>
</dbReference>
<dbReference type="PROSITE" id="PS51393">
    <property type="entry name" value="LIPOXYGENASE_3"/>
    <property type="match status" value="1"/>
</dbReference>
<dbReference type="PROSITE" id="PS50095">
    <property type="entry name" value="PLAT"/>
    <property type="match status" value="1"/>
</dbReference>
<accession>P27481</accession>
<name>LOXB_PHAVU</name>